<reference key="1">
    <citation type="journal article" date="1997" name="Nature">
        <title>The complete genome sequence of the Gram-positive bacterium Bacillus subtilis.</title>
        <authorList>
            <person name="Kunst F."/>
            <person name="Ogasawara N."/>
            <person name="Moszer I."/>
            <person name="Albertini A.M."/>
            <person name="Alloni G."/>
            <person name="Azevedo V."/>
            <person name="Bertero M.G."/>
            <person name="Bessieres P."/>
            <person name="Bolotin A."/>
            <person name="Borchert S."/>
            <person name="Borriss R."/>
            <person name="Boursier L."/>
            <person name="Brans A."/>
            <person name="Braun M."/>
            <person name="Brignell S.C."/>
            <person name="Bron S."/>
            <person name="Brouillet S."/>
            <person name="Bruschi C.V."/>
            <person name="Caldwell B."/>
            <person name="Capuano V."/>
            <person name="Carter N.M."/>
            <person name="Choi S.-K."/>
            <person name="Codani J.-J."/>
            <person name="Connerton I.F."/>
            <person name="Cummings N.J."/>
            <person name="Daniel R.A."/>
            <person name="Denizot F."/>
            <person name="Devine K.M."/>
            <person name="Duesterhoeft A."/>
            <person name="Ehrlich S.D."/>
            <person name="Emmerson P.T."/>
            <person name="Entian K.-D."/>
            <person name="Errington J."/>
            <person name="Fabret C."/>
            <person name="Ferrari E."/>
            <person name="Foulger D."/>
            <person name="Fritz C."/>
            <person name="Fujita M."/>
            <person name="Fujita Y."/>
            <person name="Fuma S."/>
            <person name="Galizzi A."/>
            <person name="Galleron N."/>
            <person name="Ghim S.-Y."/>
            <person name="Glaser P."/>
            <person name="Goffeau A."/>
            <person name="Golightly E.J."/>
            <person name="Grandi G."/>
            <person name="Guiseppi G."/>
            <person name="Guy B.J."/>
            <person name="Haga K."/>
            <person name="Haiech J."/>
            <person name="Harwood C.R."/>
            <person name="Henaut A."/>
            <person name="Hilbert H."/>
            <person name="Holsappel S."/>
            <person name="Hosono S."/>
            <person name="Hullo M.-F."/>
            <person name="Itaya M."/>
            <person name="Jones L.-M."/>
            <person name="Joris B."/>
            <person name="Karamata D."/>
            <person name="Kasahara Y."/>
            <person name="Klaerr-Blanchard M."/>
            <person name="Klein C."/>
            <person name="Kobayashi Y."/>
            <person name="Koetter P."/>
            <person name="Koningstein G."/>
            <person name="Krogh S."/>
            <person name="Kumano M."/>
            <person name="Kurita K."/>
            <person name="Lapidus A."/>
            <person name="Lardinois S."/>
            <person name="Lauber J."/>
            <person name="Lazarevic V."/>
            <person name="Lee S.-M."/>
            <person name="Levine A."/>
            <person name="Liu H."/>
            <person name="Masuda S."/>
            <person name="Mauel C."/>
            <person name="Medigue C."/>
            <person name="Medina N."/>
            <person name="Mellado R.P."/>
            <person name="Mizuno M."/>
            <person name="Moestl D."/>
            <person name="Nakai S."/>
            <person name="Noback M."/>
            <person name="Noone D."/>
            <person name="O'Reilly M."/>
            <person name="Ogawa K."/>
            <person name="Ogiwara A."/>
            <person name="Oudega B."/>
            <person name="Park S.-H."/>
            <person name="Parro V."/>
            <person name="Pohl T.M."/>
            <person name="Portetelle D."/>
            <person name="Porwollik S."/>
            <person name="Prescott A.M."/>
            <person name="Presecan E."/>
            <person name="Pujic P."/>
            <person name="Purnelle B."/>
            <person name="Rapoport G."/>
            <person name="Rey M."/>
            <person name="Reynolds S."/>
            <person name="Rieger M."/>
            <person name="Rivolta C."/>
            <person name="Rocha E."/>
            <person name="Roche B."/>
            <person name="Rose M."/>
            <person name="Sadaie Y."/>
            <person name="Sato T."/>
            <person name="Scanlan E."/>
            <person name="Schleich S."/>
            <person name="Schroeter R."/>
            <person name="Scoffone F."/>
            <person name="Sekiguchi J."/>
            <person name="Sekowska A."/>
            <person name="Seror S.J."/>
            <person name="Serror P."/>
            <person name="Shin B.-S."/>
            <person name="Soldo B."/>
            <person name="Sorokin A."/>
            <person name="Tacconi E."/>
            <person name="Takagi T."/>
            <person name="Takahashi H."/>
            <person name="Takemaru K."/>
            <person name="Takeuchi M."/>
            <person name="Tamakoshi A."/>
            <person name="Tanaka T."/>
            <person name="Terpstra P."/>
            <person name="Tognoni A."/>
            <person name="Tosato V."/>
            <person name="Uchiyama S."/>
            <person name="Vandenbol M."/>
            <person name="Vannier F."/>
            <person name="Vassarotti A."/>
            <person name="Viari A."/>
            <person name="Wambutt R."/>
            <person name="Wedler E."/>
            <person name="Wedler H."/>
            <person name="Weitzenegger T."/>
            <person name="Winters P."/>
            <person name="Wipat A."/>
            <person name="Yamamoto H."/>
            <person name="Yamane K."/>
            <person name="Yasumoto K."/>
            <person name="Yata K."/>
            <person name="Yoshida K."/>
            <person name="Yoshikawa H.-F."/>
            <person name="Zumstein E."/>
            <person name="Yoshikawa H."/>
            <person name="Danchin A."/>
        </authorList>
    </citation>
    <scope>NUCLEOTIDE SEQUENCE [LARGE SCALE GENOMIC DNA]</scope>
    <source>
        <strain>168</strain>
    </source>
</reference>
<name>YOKE_BACSU</name>
<organism>
    <name type="scientific">Bacillus subtilis (strain 168)</name>
    <dbReference type="NCBI Taxonomy" id="224308"/>
    <lineage>
        <taxon>Bacteria</taxon>
        <taxon>Bacillati</taxon>
        <taxon>Bacillota</taxon>
        <taxon>Bacilli</taxon>
        <taxon>Bacillales</taxon>
        <taxon>Bacillaceae</taxon>
        <taxon>Bacillus</taxon>
    </lineage>
</organism>
<proteinExistence type="predicted"/>
<feature type="chain" id="PRO_0000360740" description="SPbeta prophage-derived uncharacterized protein YokE">
    <location>
        <begin position="1"/>
        <end position="160"/>
    </location>
</feature>
<keyword id="KW-1185">Reference proteome</keyword>
<dbReference type="EMBL" id="AL009126">
    <property type="protein sequence ID" value="CAB14080.1"/>
    <property type="molecule type" value="Genomic_DNA"/>
</dbReference>
<dbReference type="RefSeq" id="NP_390045.1">
    <property type="nucleotide sequence ID" value="NC_000964.3"/>
</dbReference>
<dbReference type="RefSeq" id="WP_004398883.1">
    <property type="nucleotide sequence ID" value="NZ_OZ025638.1"/>
</dbReference>
<dbReference type="FunCoup" id="O32002">
    <property type="interactions" value="5"/>
</dbReference>
<dbReference type="STRING" id="224308.BSU21620"/>
<dbReference type="PaxDb" id="224308-BSU21620"/>
<dbReference type="EnsemblBacteria" id="CAB14080">
    <property type="protein sequence ID" value="CAB14080"/>
    <property type="gene ID" value="BSU_21620"/>
</dbReference>
<dbReference type="GeneID" id="939108"/>
<dbReference type="KEGG" id="bsu:BSU21620"/>
<dbReference type="PATRIC" id="fig|224308.179.peg.2361"/>
<dbReference type="eggNOG" id="ENOG5030E09">
    <property type="taxonomic scope" value="Bacteria"/>
</dbReference>
<dbReference type="InParanoid" id="O32002"/>
<dbReference type="OrthoDB" id="2931897at2"/>
<dbReference type="BioCyc" id="BSUB:BSU21620-MONOMER"/>
<dbReference type="Proteomes" id="UP000001570">
    <property type="component" value="Chromosome"/>
</dbReference>
<dbReference type="InterPro" id="IPR039519">
    <property type="entry name" value="YokE-like_PH"/>
</dbReference>
<dbReference type="Pfam" id="PF14470">
    <property type="entry name" value="bPH_3"/>
    <property type="match status" value="1"/>
</dbReference>
<protein>
    <recommendedName>
        <fullName>SPbeta prophage-derived uncharacterized protein YokE</fullName>
    </recommendedName>
</protein>
<gene>
    <name type="primary">yokE</name>
    <name type="ordered locus">BSU21620</name>
</gene>
<sequence>MGQKFHKLNSKYGIIDYPILLKDLESIIQEFPKSERKFYEYAIKALKKEVGKKEKILHMTSADPKLTKFGFMVITEKKLLFVTMKGGFFGGADTEVVEFKSIKEVDFDIAPNPLGMATMQLGILHLKIKGKLGMSSKRTIRNIDEHSLDKIVAILREQTK</sequence>
<accession>O32002</accession>